<sequence length="211" mass="24603">MKRTSAALVVFLILLFLGLLFLPMFIVYGGFGLLDPLATKERYTLSYYIYLESRKPFENVTVLIPAAKLGSLEIVPANFEIVKIGNRTYIKIAREKPYYEIYRLHGENETLTNYRMDITVEFPEIKIENLTEYRIDDGNVSVLLDYTNSSYVSLQVMLYYLELDYVDIFGKRIYTNFGHYNYLWCKTTPVNITEDKRGRWMKVPVSCGGEL</sequence>
<organism>
    <name type="scientific">Archaeoglobus fulgidus (strain ATCC 49558 / DSM 4304 / JCM 9628 / NBRC 100126 / VC-16)</name>
    <dbReference type="NCBI Taxonomy" id="224325"/>
    <lineage>
        <taxon>Archaea</taxon>
        <taxon>Methanobacteriati</taxon>
        <taxon>Methanobacteriota</taxon>
        <taxon>Archaeoglobi</taxon>
        <taxon>Archaeoglobales</taxon>
        <taxon>Archaeoglobaceae</taxon>
        <taxon>Archaeoglobus</taxon>
    </lineage>
</organism>
<evidence type="ECO:0000255" key="1"/>
<protein>
    <recommendedName>
        <fullName>Uncharacterized protein AF_2171</fullName>
    </recommendedName>
</protein>
<reference key="1">
    <citation type="journal article" date="1997" name="Nature">
        <title>The complete genome sequence of the hyperthermophilic, sulphate-reducing archaeon Archaeoglobus fulgidus.</title>
        <authorList>
            <person name="Klenk H.-P."/>
            <person name="Clayton R.A."/>
            <person name="Tomb J.-F."/>
            <person name="White O."/>
            <person name="Nelson K.E."/>
            <person name="Ketchum K.A."/>
            <person name="Dodson R.J."/>
            <person name="Gwinn M.L."/>
            <person name="Hickey E.K."/>
            <person name="Peterson J.D."/>
            <person name="Richardson D.L."/>
            <person name="Kerlavage A.R."/>
            <person name="Graham D.E."/>
            <person name="Kyrpides N.C."/>
            <person name="Fleischmann R.D."/>
            <person name="Quackenbush J."/>
            <person name="Lee N.H."/>
            <person name="Sutton G.G."/>
            <person name="Gill S.R."/>
            <person name="Kirkness E.F."/>
            <person name="Dougherty B.A."/>
            <person name="McKenney K."/>
            <person name="Adams M.D."/>
            <person name="Loftus B.J."/>
            <person name="Peterson S.N."/>
            <person name="Reich C.I."/>
            <person name="McNeil L.K."/>
            <person name="Badger J.H."/>
            <person name="Glodek A."/>
            <person name="Zhou L."/>
            <person name="Overbeek R."/>
            <person name="Gocayne J.D."/>
            <person name="Weidman J.F."/>
            <person name="McDonald L.A."/>
            <person name="Utterback T.R."/>
            <person name="Cotton M.D."/>
            <person name="Spriggs T."/>
            <person name="Artiach P."/>
            <person name="Kaine B.P."/>
            <person name="Sykes S.M."/>
            <person name="Sadow P.W."/>
            <person name="D'Andrea K.P."/>
            <person name="Bowman C."/>
            <person name="Fujii C."/>
            <person name="Garland S.A."/>
            <person name="Mason T.M."/>
            <person name="Olsen G.J."/>
            <person name="Fraser C.M."/>
            <person name="Smith H.O."/>
            <person name="Woese C.R."/>
            <person name="Venter J.C."/>
        </authorList>
    </citation>
    <scope>NUCLEOTIDE SEQUENCE [LARGE SCALE GENOMIC DNA]</scope>
    <source>
        <strain>ATCC 49558 / DSM 4304 / JCM 9628 / NBRC 100126 / VC-16</strain>
    </source>
</reference>
<proteinExistence type="inferred from homology"/>
<gene>
    <name type="ordered locus">AF_2171</name>
</gene>
<keyword id="KW-1185">Reference proteome</keyword>
<keyword id="KW-0732">Signal</keyword>
<dbReference type="EMBL" id="AE000782">
    <property type="protein sequence ID" value="AAB89092.1"/>
    <property type="molecule type" value="Genomic_DNA"/>
</dbReference>
<dbReference type="PIR" id="C69521">
    <property type="entry name" value="C69521"/>
</dbReference>
<dbReference type="SMR" id="O28111"/>
<dbReference type="STRING" id="224325.AF_2171"/>
<dbReference type="PaxDb" id="224325-AF_2171"/>
<dbReference type="EnsemblBacteria" id="AAB89092">
    <property type="protein sequence ID" value="AAB89092"/>
    <property type="gene ID" value="AF_2171"/>
</dbReference>
<dbReference type="KEGG" id="afu:AF_2171"/>
<dbReference type="HOGENOM" id="CLU_1313062_0_0_2"/>
<dbReference type="Proteomes" id="UP000002199">
    <property type="component" value="Chromosome"/>
</dbReference>
<accession>O28111</accession>
<name>Y2171_ARCFU</name>
<feature type="signal peptide" evidence="1">
    <location>
        <begin position="1"/>
        <end position="27"/>
    </location>
</feature>
<feature type="chain" id="PRO_0000013684" description="Uncharacterized protein AF_2171">
    <location>
        <begin position="28"/>
        <end position="211"/>
    </location>
</feature>